<evidence type="ECO:0000250" key="1">
    <source>
        <dbReference type="UniProtKB" id="A9JQL9"/>
    </source>
</evidence>
<evidence type="ECO:0000250" key="2">
    <source>
        <dbReference type="UniProtKB" id="Q2FV59"/>
    </source>
</evidence>
<evidence type="ECO:0000305" key="3"/>
<protein>
    <recommendedName>
        <fullName evidence="2">4,4'-diapophytoene synthase</fullName>
        <shortName evidence="2">DAP synthase</shortName>
        <ecNumber evidence="2">2.5.1.96</ecNumber>
    </recommendedName>
    <alternativeName>
        <fullName evidence="2">C30 carotenoid synthase</fullName>
    </alternativeName>
    <alternativeName>
        <fullName evidence="2">Dehydrosqualene synthase</fullName>
    </alternativeName>
</protein>
<organism>
    <name type="scientific">Staphylococcus haemolyticus (strain JCSC1435)</name>
    <dbReference type="NCBI Taxonomy" id="279808"/>
    <lineage>
        <taxon>Bacteria</taxon>
        <taxon>Bacillati</taxon>
        <taxon>Bacillota</taxon>
        <taxon>Bacilli</taxon>
        <taxon>Bacillales</taxon>
        <taxon>Staphylococcaceae</taxon>
        <taxon>Staphylococcus</taxon>
    </lineage>
</organism>
<name>CRTM_STAHJ</name>
<dbReference type="EC" id="2.5.1.96" evidence="2"/>
<dbReference type="EMBL" id="AP006716">
    <property type="protein sequence ID" value="BAE03799.1"/>
    <property type="molecule type" value="Genomic_DNA"/>
</dbReference>
<dbReference type="RefSeq" id="WP_011274815.1">
    <property type="nucleotide sequence ID" value="NC_007168.1"/>
</dbReference>
<dbReference type="SMR" id="Q4L976"/>
<dbReference type="KEGG" id="sha:SH0490"/>
<dbReference type="eggNOG" id="COG1562">
    <property type="taxonomic scope" value="Bacteria"/>
</dbReference>
<dbReference type="HOGENOM" id="CLU_037269_1_3_9"/>
<dbReference type="OrthoDB" id="9787280at2"/>
<dbReference type="UniPathway" id="UPA00029">
    <property type="reaction ID" value="UER00556"/>
</dbReference>
<dbReference type="Proteomes" id="UP000000543">
    <property type="component" value="Chromosome"/>
</dbReference>
<dbReference type="GO" id="GO:0004311">
    <property type="term" value="F:geranylgeranyl diphosphate synthase activity"/>
    <property type="evidence" value="ECO:0007669"/>
    <property type="project" value="InterPro"/>
</dbReference>
<dbReference type="GO" id="GO:0046872">
    <property type="term" value="F:metal ion binding"/>
    <property type="evidence" value="ECO:0007669"/>
    <property type="project" value="UniProtKB-KW"/>
</dbReference>
<dbReference type="GO" id="GO:0051996">
    <property type="term" value="F:squalene synthase [NAD(P)H] activity"/>
    <property type="evidence" value="ECO:0007669"/>
    <property type="project" value="InterPro"/>
</dbReference>
<dbReference type="GO" id="GO:0016117">
    <property type="term" value="P:carotenoid biosynthetic process"/>
    <property type="evidence" value="ECO:0007669"/>
    <property type="project" value="UniProtKB-KW"/>
</dbReference>
<dbReference type="CDD" id="cd00683">
    <property type="entry name" value="Trans_IPPS_HH"/>
    <property type="match status" value="1"/>
</dbReference>
<dbReference type="Gene3D" id="1.10.600.10">
    <property type="entry name" value="Farnesyl Diphosphate Synthase"/>
    <property type="match status" value="1"/>
</dbReference>
<dbReference type="InterPro" id="IPR008949">
    <property type="entry name" value="Isoprenoid_synthase_dom_sf"/>
</dbReference>
<dbReference type="InterPro" id="IPR002060">
    <property type="entry name" value="Squ/phyt_synthse"/>
</dbReference>
<dbReference type="InterPro" id="IPR019845">
    <property type="entry name" value="Squalene/phytoene_synthase_CS"/>
</dbReference>
<dbReference type="InterPro" id="IPR044843">
    <property type="entry name" value="Trans_IPPS_bact-type"/>
</dbReference>
<dbReference type="InterPro" id="IPR033904">
    <property type="entry name" value="Trans_IPPS_HH"/>
</dbReference>
<dbReference type="PANTHER" id="PTHR31480">
    <property type="entry name" value="BIFUNCTIONAL LYCOPENE CYCLASE/PHYTOENE SYNTHASE"/>
    <property type="match status" value="1"/>
</dbReference>
<dbReference type="Pfam" id="PF00494">
    <property type="entry name" value="SQS_PSY"/>
    <property type="match status" value="1"/>
</dbReference>
<dbReference type="SFLD" id="SFLDS00005">
    <property type="entry name" value="Isoprenoid_Synthase_Type_I"/>
    <property type="match status" value="1"/>
</dbReference>
<dbReference type="SFLD" id="SFLDG01212">
    <property type="entry name" value="Phytoene_synthase_like"/>
    <property type="match status" value="1"/>
</dbReference>
<dbReference type="SUPFAM" id="SSF48576">
    <property type="entry name" value="Terpenoid synthases"/>
    <property type="match status" value="1"/>
</dbReference>
<dbReference type="PROSITE" id="PS01044">
    <property type="entry name" value="SQUALEN_PHYTOEN_SYN_1"/>
    <property type="match status" value="1"/>
</dbReference>
<feature type="chain" id="PRO_0000282624" description="4,4'-diapophytoene synthase">
    <location>
        <begin position="1"/>
        <end position="285"/>
    </location>
</feature>
<feature type="binding site" evidence="1">
    <location>
        <begin position="18"/>
        <end position="21"/>
    </location>
    <ligand>
        <name>(2E,6E)-farnesyl diphosphate</name>
        <dbReference type="ChEBI" id="CHEBI:175763"/>
        <label>1</label>
    </ligand>
</feature>
<feature type="binding site" evidence="1">
    <location>
        <position position="41"/>
    </location>
    <ligand>
        <name>(2E,6E)-farnesyl diphosphate</name>
        <dbReference type="ChEBI" id="CHEBI:175763"/>
        <label>1</label>
    </ligand>
</feature>
<feature type="binding site" evidence="1">
    <location>
        <position position="45"/>
    </location>
    <ligand>
        <name>(2E,6E)-farnesyl diphosphate</name>
        <dbReference type="ChEBI" id="CHEBI:175763"/>
        <label>1</label>
    </ligand>
</feature>
<feature type="binding site" evidence="1">
    <location>
        <position position="45"/>
    </location>
    <ligand>
        <name>(2E,6E)-farnesyl diphosphate</name>
        <dbReference type="ChEBI" id="CHEBI:175763"/>
        <label>2</label>
    </ligand>
</feature>
<feature type="binding site" evidence="1">
    <location>
        <position position="48"/>
    </location>
    <ligand>
        <name>Mg(2+)</name>
        <dbReference type="ChEBI" id="CHEBI:18420"/>
        <label>1</label>
    </ligand>
</feature>
<feature type="binding site" evidence="1">
    <location>
        <position position="52"/>
    </location>
    <ligand>
        <name>Mg(2+)</name>
        <dbReference type="ChEBI" id="CHEBI:18420"/>
        <label>1</label>
    </ligand>
</feature>
<feature type="binding site" evidence="1">
    <location>
        <position position="163"/>
    </location>
    <ligand>
        <name>(2E,6E)-farnesyl diphosphate</name>
        <dbReference type="ChEBI" id="CHEBI:175763"/>
        <label>2</label>
    </ligand>
</feature>
<feature type="binding site" evidence="1">
    <location>
        <position position="166"/>
    </location>
    <ligand>
        <name>Mg(2+)</name>
        <dbReference type="ChEBI" id="CHEBI:18420"/>
        <label>2</label>
    </ligand>
</feature>
<feature type="binding site" evidence="1">
    <location>
        <position position="169"/>
    </location>
    <ligand>
        <name>(2E,6E)-farnesyl diphosphate</name>
        <dbReference type="ChEBI" id="CHEBI:175763"/>
        <label>1</label>
    </ligand>
</feature>
<feature type="binding site" evidence="1">
    <location>
        <position position="170"/>
    </location>
    <ligand>
        <name>Mg(2+)</name>
        <dbReference type="ChEBI" id="CHEBI:18420"/>
        <label>2</label>
    </ligand>
</feature>
<feature type="binding site" evidence="1">
    <location>
        <position position="247"/>
    </location>
    <ligand>
        <name>(2E,6E)-farnesyl diphosphate</name>
        <dbReference type="ChEBI" id="CHEBI:175763"/>
        <label>1</label>
    </ligand>
</feature>
<comment type="function">
    <text evidence="2">Involved in the biosynthesis of the yellow-orange carotenoid staphyloxanthin, which plays a role in the virulence via its protective function against oxidative stress. Catalyzes the head-to-head condensation of two molecules of farnesyl diphosphate (FPP) into the colorless C(30) carotenoid 4,4'-diapophytoene (dehydrosqualene).</text>
</comment>
<comment type="catalytic activity">
    <reaction evidence="2">
        <text>2 (2E,6E)-farnesyl diphosphate = 15-cis-4,4'-diapophytoene + 2 diphosphate</text>
        <dbReference type="Rhea" id="RHEA:31547"/>
        <dbReference type="ChEBI" id="CHEBI:33019"/>
        <dbReference type="ChEBI" id="CHEBI:62738"/>
        <dbReference type="ChEBI" id="CHEBI:175763"/>
        <dbReference type="EC" id="2.5.1.96"/>
    </reaction>
</comment>
<comment type="cofactor">
    <cofactor evidence="1">
        <name>Mg(2+)</name>
        <dbReference type="ChEBI" id="CHEBI:18420"/>
    </cofactor>
    <text evidence="1">Binds 2 Mg(2+) ions per subunit.</text>
</comment>
<comment type="pathway">
    <text evidence="2">Carotenoid biosynthesis; staphyloxanthin biosynthesis; staphyloxanthin from farnesyl diphosphate: step 1/5.</text>
</comment>
<comment type="similarity">
    <text evidence="3">Belongs to the phytoene/squalene synthase family. CrtM subfamily.</text>
</comment>
<gene>
    <name type="primary">crtM</name>
    <name type="ordered locus">SH0490</name>
</gene>
<accession>Q4L976</accession>
<reference key="1">
    <citation type="journal article" date="2005" name="J. Bacteriol.">
        <title>Whole-genome sequencing of Staphylococcus haemolyticus uncovers the extreme plasticity of its genome and the evolution of human-colonizing staphylococcal species.</title>
        <authorList>
            <person name="Takeuchi F."/>
            <person name="Watanabe S."/>
            <person name="Baba T."/>
            <person name="Yuzawa H."/>
            <person name="Ito T."/>
            <person name="Morimoto Y."/>
            <person name="Kuroda M."/>
            <person name="Cui L."/>
            <person name="Takahashi M."/>
            <person name="Ankai A."/>
            <person name="Baba S."/>
            <person name="Fukui S."/>
            <person name="Lee J.C."/>
            <person name="Hiramatsu K."/>
        </authorList>
    </citation>
    <scope>NUCLEOTIDE SEQUENCE [LARGE SCALE GENOMIC DNA]</scope>
    <source>
        <strain>JCSC1435</strain>
    </source>
</reference>
<sequence>MSTLEENYQYCHQIMKDYSKSFSYAFDMLPEQQRRAIWAIYAVCRIVDDSIDVHQDVEYLHKINRDVKAIEHQTTTTFESDDRIMTAFADAATHFQMNFQALYDLIDTVEADQHFEMFETDRGLLDYCYGVAGTVGVLLIPILATPPSDEAYEYGKQLGEALQLTNILRDVGEDYRNGRIYFSKARLNEFNVSIADEIERDQLSDNYIKIWEFYATLADNNYDMVLNHLDVYNEESRMIIELAAQVYRGILTEVRKADYSLKDRAYVSKWKKHKIYRNLKKKYKD</sequence>
<proteinExistence type="inferred from homology"/>
<keyword id="KW-0125">Carotenoid biosynthesis</keyword>
<keyword id="KW-0460">Magnesium</keyword>
<keyword id="KW-0479">Metal-binding</keyword>
<keyword id="KW-0808">Transferase</keyword>
<keyword id="KW-0843">Virulence</keyword>